<name>EX7S_SALHS</name>
<keyword id="KW-0963">Cytoplasm</keyword>
<keyword id="KW-0269">Exonuclease</keyword>
<keyword id="KW-0378">Hydrolase</keyword>
<keyword id="KW-0540">Nuclease</keyword>
<feature type="chain" id="PRO_1000119953" description="Exodeoxyribonuclease 7 small subunit">
    <location>
        <begin position="1"/>
        <end position="80"/>
    </location>
</feature>
<organism>
    <name type="scientific">Salmonella heidelberg (strain SL476)</name>
    <dbReference type="NCBI Taxonomy" id="454169"/>
    <lineage>
        <taxon>Bacteria</taxon>
        <taxon>Pseudomonadati</taxon>
        <taxon>Pseudomonadota</taxon>
        <taxon>Gammaproteobacteria</taxon>
        <taxon>Enterobacterales</taxon>
        <taxon>Enterobacteriaceae</taxon>
        <taxon>Salmonella</taxon>
    </lineage>
</organism>
<sequence>MPKKNEAPASFETALSELEHIVTRLESGDLPLEDALNEFERGVQLARQGQAKLQQAEQRVQILLSDNEEASPEPFIADNE</sequence>
<reference key="1">
    <citation type="journal article" date="2011" name="J. Bacteriol.">
        <title>Comparative genomics of 28 Salmonella enterica isolates: evidence for CRISPR-mediated adaptive sublineage evolution.</title>
        <authorList>
            <person name="Fricke W.F."/>
            <person name="Mammel M.K."/>
            <person name="McDermott P.F."/>
            <person name="Tartera C."/>
            <person name="White D.G."/>
            <person name="Leclerc J.E."/>
            <person name="Ravel J."/>
            <person name="Cebula T.A."/>
        </authorList>
    </citation>
    <scope>NUCLEOTIDE SEQUENCE [LARGE SCALE GENOMIC DNA]</scope>
    <source>
        <strain>SL476</strain>
    </source>
</reference>
<proteinExistence type="inferred from homology"/>
<comment type="function">
    <text evidence="1">Bidirectionally degrades single-stranded DNA into large acid-insoluble oligonucleotides, which are then degraded further into small acid-soluble oligonucleotides.</text>
</comment>
<comment type="catalytic activity">
    <reaction evidence="1">
        <text>Exonucleolytic cleavage in either 5'- to 3'- or 3'- to 5'-direction to yield nucleoside 5'-phosphates.</text>
        <dbReference type="EC" id="3.1.11.6"/>
    </reaction>
</comment>
<comment type="subunit">
    <text evidence="1">Heterooligomer composed of large and small subunits.</text>
</comment>
<comment type="subcellular location">
    <subcellularLocation>
        <location evidence="1">Cytoplasm</location>
    </subcellularLocation>
</comment>
<comment type="similarity">
    <text evidence="1">Belongs to the XseB family.</text>
</comment>
<accession>B4T8R5</accession>
<gene>
    <name evidence="1" type="primary">xseB</name>
    <name type="ordered locus">SeHA_C0526</name>
</gene>
<protein>
    <recommendedName>
        <fullName evidence="1">Exodeoxyribonuclease 7 small subunit</fullName>
        <ecNumber evidence="1">3.1.11.6</ecNumber>
    </recommendedName>
    <alternativeName>
        <fullName evidence="1">Exodeoxyribonuclease VII small subunit</fullName>
        <shortName evidence="1">Exonuclease VII small subunit</shortName>
    </alternativeName>
</protein>
<dbReference type="EC" id="3.1.11.6" evidence="1"/>
<dbReference type="EMBL" id="CP001120">
    <property type="protein sequence ID" value="ACF68377.1"/>
    <property type="molecule type" value="Genomic_DNA"/>
</dbReference>
<dbReference type="RefSeq" id="WP_001124944.1">
    <property type="nucleotide sequence ID" value="NC_011083.1"/>
</dbReference>
<dbReference type="SMR" id="B4T8R5"/>
<dbReference type="KEGG" id="seh:SeHA_C0526"/>
<dbReference type="HOGENOM" id="CLU_145918_3_3_6"/>
<dbReference type="Proteomes" id="UP000001866">
    <property type="component" value="Chromosome"/>
</dbReference>
<dbReference type="GO" id="GO:0005829">
    <property type="term" value="C:cytosol"/>
    <property type="evidence" value="ECO:0007669"/>
    <property type="project" value="TreeGrafter"/>
</dbReference>
<dbReference type="GO" id="GO:0009318">
    <property type="term" value="C:exodeoxyribonuclease VII complex"/>
    <property type="evidence" value="ECO:0007669"/>
    <property type="project" value="InterPro"/>
</dbReference>
<dbReference type="GO" id="GO:0008855">
    <property type="term" value="F:exodeoxyribonuclease VII activity"/>
    <property type="evidence" value="ECO:0007669"/>
    <property type="project" value="UniProtKB-UniRule"/>
</dbReference>
<dbReference type="GO" id="GO:0006308">
    <property type="term" value="P:DNA catabolic process"/>
    <property type="evidence" value="ECO:0007669"/>
    <property type="project" value="UniProtKB-UniRule"/>
</dbReference>
<dbReference type="FunFam" id="1.10.287.1040:FF:000001">
    <property type="entry name" value="Exodeoxyribonuclease 7 small subunit"/>
    <property type="match status" value="1"/>
</dbReference>
<dbReference type="Gene3D" id="1.10.287.1040">
    <property type="entry name" value="Exonuclease VII, small subunit"/>
    <property type="match status" value="1"/>
</dbReference>
<dbReference type="HAMAP" id="MF_00337">
    <property type="entry name" value="Exonuc_7_S"/>
    <property type="match status" value="1"/>
</dbReference>
<dbReference type="InterPro" id="IPR003761">
    <property type="entry name" value="Exonuc_VII_S"/>
</dbReference>
<dbReference type="InterPro" id="IPR037004">
    <property type="entry name" value="Exonuc_VII_ssu_sf"/>
</dbReference>
<dbReference type="NCBIfam" id="NF002137">
    <property type="entry name" value="PRK00977.1-1"/>
    <property type="match status" value="1"/>
</dbReference>
<dbReference type="NCBIfam" id="NF002140">
    <property type="entry name" value="PRK00977.1-4"/>
    <property type="match status" value="1"/>
</dbReference>
<dbReference type="NCBIfam" id="TIGR01280">
    <property type="entry name" value="xseB"/>
    <property type="match status" value="1"/>
</dbReference>
<dbReference type="PANTHER" id="PTHR34137">
    <property type="entry name" value="EXODEOXYRIBONUCLEASE 7 SMALL SUBUNIT"/>
    <property type="match status" value="1"/>
</dbReference>
<dbReference type="PANTHER" id="PTHR34137:SF1">
    <property type="entry name" value="EXODEOXYRIBONUCLEASE 7 SMALL SUBUNIT"/>
    <property type="match status" value="1"/>
</dbReference>
<dbReference type="Pfam" id="PF02609">
    <property type="entry name" value="Exonuc_VII_S"/>
    <property type="match status" value="1"/>
</dbReference>
<dbReference type="PIRSF" id="PIRSF006488">
    <property type="entry name" value="Exonuc_VII_S"/>
    <property type="match status" value="1"/>
</dbReference>
<dbReference type="SUPFAM" id="SSF116842">
    <property type="entry name" value="XseB-like"/>
    <property type="match status" value="1"/>
</dbReference>
<evidence type="ECO:0000255" key="1">
    <source>
        <dbReference type="HAMAP-Rule" id="MF_00337"/>
    </source>
</evidence>